<keyword id="KW-0687">Ribonucleoprotein</keyword>
<keyword id="KW-0689">Ribosomal protein</keyword>
<keyword id="KW-0694">RNA-binding</keyword>
<keyword id="KW-0699">rRNA-binding</keyword>
<dbReference type="EMBL" id="CP000538">
    <property type="protein sequence ID" value="EAQ72536.1"/>
    <property type="molecule type" value="Genomic_DNA"/>
</dbReference>
<dbReference type="RefSeq" id="WP_002856547.1">
    <property type="nucleotide sequence ID" value="NC_008787.1"/>
</dbReference>
<dbReference type="SMR" id="A1W1L3"/>
<dbReference type="KEGG" id="cjj:CJJ81176_1598"/>
<dbReference type="eggNOG" id="COG0268">
    <property type="taxonomic scope" value="Bacteria"/>
</dbReference>
<dbReference type="HOGENOM" id="CLU_160655_3_0_7"/>
<dbReference type="Proteomes" id="UP000000646">
    <property type="component" value="Chromosome"/>
</dbReference>
<dbReference type="GO" id="GO:0005829">
    <property type="term" value="C:cytosol"/>
    <property type="evidence" value="ECO:0007669"/>
    <property type="project" value="TreeGrafter"/>
</dbReference>
<dbReference type="GO" id="GO:0015935">
    <property type="term" value="C:small ribosomal subunit"/>
    <property type="evidence" value="ECO:0007669"/>
    <property type="project" value="TreeGrafter"/>
</dbReference>
<dbReference type="GO" id="GO:0070181">
    <property type="term" value="F:small ribosomal subunit rRNA binding"/>
    <property type="evidence" value="ECO:0007669"/>
    <property type="project" value="TreeGrafter"/>
</dbReference>
<dbReference type="GO" id="GO:0003735">
    <property type="term" value="F:structural constituent of ribosome"/>
    <property type="evidence" value="ECO:0007669"/>
    <property type="project" value="InterPro"/>
</dbReference>
<dbReference type="GO" id="GO:0006412">
    <property type="term" value="P:translation"/>
    <property type="evidence" value="ECO:0007669"/>
    <property type="project" value="UniProtKB-UniRule"/>
</dbReference>
<dbReference type="FunFam" id="1.20.58.110:FF:000001">
    <property type="entry name" value="30S ribosomal protein S20"/>
    <property type="match status" value="1"/>
</dbReference>
<dbReference type="Gene3D" id="1.20.58.110">
    <property type="entry name" value="Ribosomal protein S20"/>
    <property type="match status" value="1"/>
</dbReference>
<dbReference type="HAMAP" id="MF_00500">
    <property type="entry name" value="Ribosomal_bS20"/>
    <property type="match status" value="1"/>
</dbReference>
<dbReference type="InterPro" id="IPR002583">
    <property type="entry name" value="Ribosomal_bS20"/>
</dbReference>
<dbReference type="InterPro" id="IPR036510">
    <property type="entry name" value="Ribosomal_bS20_sf"/>
</dbReference>
<dbReference type="NCBIfam" id="TIGR00029">
    <property type="entry name" value="S20"/>
    <property type="match status" value="1"/>
</dbReference>
<dbReference type="PANTHER" id="PTHR33398">
    <property type="entry name" value="30S RIBOSOMAL PROTEIN S20"/>
    <property type="match status" value="1"/>
</dbReference>
<dbReference type="PANTHER" id="PTHR33398:SF1">
    <property type="entry name" value="SMALL RIBOSOMAL SUBUNIT PROTEIN BS20C"/>
    <property type="match status" value="1"/>
</dbReference>
<dbReference type="Pfam" id="PF01649">
    <property type="entry name" value="Ribosomal_S20p"/>
    <property type="match status" value="1"/>
</dbReference>
<dbReference type="SUPFAM" id="SSF46992">
    <property type="entry name" value="Ribosomal protein S20"/>
    <property type="match status" value="1"/>
</dbReference>
<protein>
    <recommendedName>
        <fullName evidence="1">Small ribosomal subunit protein bS20</fullName>
    </recommendedName>
    <alternativeName>
        <fullName evidence="3">30S ribosomal protein S20</fullName>
    </alternativeName>
</protein>
<gene>
    <name evidence="1" type="primary">rpsT</name>
    <name type="ordered locus">CJJ81176_1598</name>
</gene>
<name>RS20_CAMJJ</name>
<sequence>MANHKSAEKRARQTIKKTERNRFYRTRLKNITKAVREAAANGDKNAANEALKVANKSIHAMVSRGFIKKQTASRRVSRLALLVNKIA</sequence>
<evidence type="ECO:0000255" key="1">
    <source>
        <dbReference type="HAMAP-Rule" id="MF_00500"/>
    </source>
</evidence>
<evidence type="ECO:0000256" key="2">
    <source>
        <dbReference type="SAM" id="MobiDB-lite"/>
    </source>
</evidence>
<evidence type="ECO:0000305" key="3"/>
<accession>A1W1L3</accession>
<feature type="chain" id="PRO_1000014569" description="Small ribosomal subunit protein bS20">
    <location>
        <begin position="1"/>
        <end position="87"/>
    </location>
</feature>
<feature type="region of interest" description="Disordered" evidence="2">
    <location>
        <begin position="1"/>
        <end position="21"/>
    </location>
</feature>
<proteinExistence type="inferred from homology"/>
<comment type="function">
    <text evidence="1">Binds directly to 16S ribosomal RNA.</text>
</comment>
<comment type="similarity">
    <text evidence="1">Belongs to the bacterial ribosomal protein bS20 family.</text>
</comment>
<reference key="1">
    <citation type="submission" date="2006-12" db="EMBL/GenBank/DDBJ databases">
        <authorList>
            <person name="Fouts D.E."/>
            <person name="Nelson K.E."/>
            <person name="Sebastian Y."/>
        </authorList>
    </citation>
    <scope>NUCLEOTIDE SEQUENCE [LARGE SCALE GENOMIC DNA]</scope>
    <source>
        <strain>81-176</strain>
    </source>
</reference>
<organism>
    <name type="scientific">Campylobacter jejuni subsp. jejuni serotype O:23/36 (strain 81-176)</name>
    <dbReference type="NCBI Taxonomy" id="354242"/>
    <lineage>
        <taxon>Bacteria</taxon>
        <taxon>Pseudomonadati</taxon>
        <taxon>Campylobacterota</taxon>
        <taxon>Epsilonproteobacteria</taxon>
        <taxon>Campylobacterales</taxon>
        <taxon>Campylobacteraceae</taxon>
        <taxon>Campylobacter</taxon>
    </lineage>
</organism>